<proteinExistence type="inferred from homology"/>
<gene>
    <name type="ordered locus">RHOS4_22610</name>
    <name type="ORF">RSP_0655</name>
</gene>
<comment type="subcellular location">
    <subcellularLocation>
        <location evidence="1">Cytoplasm</location>
    </subcellularLocation>
</comment>
<comment type="similarity">
    <text evidence="1">Belongs to the TACO1 family.</text>
</comment>
<sequence length="248" mass="27168">MAGHSKWANIQHRKGKQDKLRSKMFSKLAKEITVAAKMGDPDPDKNPRLRLAVKAAKAVSMPKDVIERAIKKSQGGDAEDYSEIRYEGYGPNGIAIIVETMTDNVNRTASNVRSYFTKYGGNLGTTGSVSFMFDRVGEITYKPAAGDADTVMMAAIEAGADDVESDEEGHWIYCGDTSLNEVSEALEKVLGESEEAKLVWKPQNRTNVDLETAQKLMKLIDALEEDDDVQTVTGNFDIPEDVAAKLDA</sequence>
<name>Y2261_CERS4</name>
<keyword id="KW-0963">Cytoplasm</keyword>
<keyword id="KW-0238">DNA-binding</keyword>
<keyword id="KW-1185">Reference proteome</keyword>
<keyword id="KW-0804">Transcription</keyword>
<keyword id="KW-0805">Transcription regulation</keyword>
<dbReference type="EMBL" id="CP000143">
    <property type="protein sequence ID" value="ABA79829.1"/>
    <property type="molecule type" value="Genomic_DNA"/>
</dbReference>
<dbReference type="RefSeq" id="WP_011338392.1">
    <property type="nucleotide sequence ID" value="NC_007493.2"/>
</dbReference>
<dbReference type="RefSeq" id="YP_353730.1">
    <property type="nucleotide sequence ID" value="NC_007493.2"/>
</dbReference>
<dbReference type="SMR" id="Q3J055"/>
<dbReference type="STRING" id="272943.RSP_0655"/>
<dbReference type="EnsemblBacteria" id="ABA79829">
    <property type="protein sequence ID" value="ABA79829"/>
    <property type="gene ID" value="RSP_0655"/>
</dbReference>
<dbReference type="GeneID" id="3718304"/>
<dbReference type="KEGG" id="rsp:RSP_0655"/>
<dbReference type="PATRIC" id="fig|272943.9.peg.2605"/>
<dbReference type="eggNOG" id="COG0217">
    <property type="taxonomic scope" value="Bacteria"/>
</dbReference>
<dbReference type="OrthoDB" id="9781053at2"/>
<dbReference type="PhylomeDB" id="Q3J055"/>
<dbReference type="Proteomes" id="UP000002703">
    <property type="component" value="Chromosome 1"/>
</dbReference>
<dbReference type="GO" id="GO:0005829">
    <property type="term" value="C:cytosol"/>
    <property type="evidence" value="ECO:0007669"/>
    <property type="project" value="TreeGrafter"/>
</dbReference>
<dbReference type="GO" id="GO:0003677">
    <property type="term" value="F:DNA binding"/>
    <property type="evidence" value="ECO:0007669"/>
    <property type="project" value="UniProtKB-UniRule"/>
</dbReference>
<dbReference type="GO" id="GO:0006355">
    <property type="term" value="P:regulation of DNA-templated transcription"/>
    <property type="evidence" value="ECO:0007669"/>
    <property type="project" value="UniProtKB-UniRule"/>
</dbReference>
<dbReference type="FunFam" id="1.10.10.200:FF:000002">
    <property type="entry name" value="Probable transcriptional regulatory protein CLM62_37755"/>
    <property type="match status" value="1"/>
</dbReference>
<dbReference type="Gene3D" id="1.10.10.200">
    <property type="match status" value="1"/>
</dbReference>
<dbReference type="Gene3D" id="3.30.70.980">
    <property type="match status" value="2"/>
</dbReference>
<dbReference type="HAMAP" id="MF_00693">
    <property type="entry name" value="Transcrip_reg_TACO1"/>
    <property type="match status" value="1"/>
</dbReference>
<dbReference type="InterPro" id="IPR017856">
    <property type="entry name" value="Integrase-like_N"/>
</dbReference>
<dbReference type="InterPro" id="IPR048300">
    <property type="entry name" value="TACO1_YebC-like_2nd/3rd_dom"/>
</dbReference>
<dbReference type="InterPro" id="IPR049083">
    <property type="entry name" value="TACO1_YebC_N"/>
</dbReference>
<dbReference type="InterPro" id="IPR002876">
    <property type="entry name" value="Transcrip_reg_TACO1-like"/>
</dbReference>
<dbReference type="InterPro" id="IPR026564">
    <property type="entry name" value="Transcrip_reg_TACO1-like_dom3"/>
</dbReference>
<dbReference type="InterPro" id="IPR029072">
    <property type="entry name" value="YebC-like"/>
</dbReference>
<dbReference type="NCBIfam" id="NF001030">
    <property type="entry name" value="PRK00110.1"/>
    <property type="match status" value="1"/>
</dbReference>
<dbReference type="NCBIfam" id="NF009044">
    <property type="entry name" value="PRK12378.1"/>
    <property type="match status" value="1"/>
</dbReference>
<dbReference type="NCBIfam" id="TIGR01033">
    <property type="entry name" value="YebC/PmpR family DNA-binding transcriptional regulator"/>
    <property type="match status" value="1"/>
</dbReference>
<dbReference type="PANTHER" id="PTHR12532:SF6">
    <property type="entry name" value="TRANSCRIPTIONAL REGULATORY PROTEIN YEBC-RELATED"/>
    <property type="match status" value="1"/>
</dbReference>
<dbReference type="PANTHER" id="PTHR12532">
    <property type="entry name" value="TRANSLATIONAL ACTIVATOR OF CYTOCHROME C OXIDASE 1"/>
    <property type="match status" value="1"/>
</dbReference>
<dbReference type="Pfam" id="PF20772">
    <property type="entry name" value="TACO1_YebC_N"/>
    <property type="match status" value="1"/>
</dbReference>
<dbReference type="Pfam" id="PF01709">
    <property type="entry name" value="Transcrip_reg"/>
    <property type="match status" value="1"/>
</dbReference>
<dbReference type="SUPFAM" id="SSF75625">
    <property type="entry name" value="YebC-like"/>
    <property type="match status" value="1"/>
</dbReference>
<protein>
    <recommendedName>
        <fullName evidence="1">Probable transcriptional regulatory protein RHOS4_22610</fullName>
    </recommendedName>
</protein>
<evidence type="ECO:0000255" key="1">
    <source>
        <dbReference type="HAMAP-Rule" id="MF_00693"/>
    </source>
</evidence>
<evidence type="ECO:0000256" key="2">
    <source>
        <dbReference type="SAM" id="MobiDB-lite"/>
    </source>
</evidence>
<reference key="1">
    <citation type="submission" date="2005-09" db="EMBL/GenBank/DDBJ databases">
        <title>Complete sequence of chromosome 1 of Rhodobacter sphaeroides 2.4.1.</title>
        <authorList>
            <person name="Copeland A."/>
            <person name="Lucas S."/>
            <person name="Lapidus A."/>
            <person name="Barry K."/>
            <person name="Detter J.C."/>
            <person name="Glavina T."/>
            <person name="Hammon N."/>
            <person name="Israni S."/>
            <person name="Pitluck S."/>
            <person name="Richardson P."/>
            <person name="Mackenzie C."/>
            <person name="Choudhary M."/>
            <person name="Larimer F."/>
            <person name="Hauser L.J."/>
            <person name="Land M."/>
            <person name="Donohue T.J."/>
            <person name="Kaplan S."/>
        </authorList>
    </citation>
    <scope>NUCLEOTIDE SEQUENCE [LARGE SCALE GENOMIC DNA]</scope>
    <source>
        <strain>ATCC 17023 / DSM 158 / JCM 6121 / CCUG 31486 / LMG 2827 / NBRC 12203 / NCIMB 8253 / ATH 2.4.1.</strain>
    </source>
</reference>
<organism>
    <name type="scientific">Cereibacter sphaeroides (strain ATCC 17023 / DSM 158 / JCM 6121 / CCUG 31486 / LMG 2827 / NBRC 12203 / NCIMB 8253 / ATH 2.4.1.)</name>
    <name type="common">Rhodobacter sphaeroides</name>
    <dbReference type="NCBI Taxonomy" id="272943"/>
    <lineage>
        <taxon>Bacteria</taxon>
        <taxon>Pseudomonadati</taxon>
        <taxon>Pseudomonadota</taxon>
        <taxon>Alphaproteobacteria</taxon>
        <taxon>Rhodobacterales</taxon>
        <taxon>Paracoccaceae</taxon>
        <taxon>Cereibacter</taxon>
    </lineage>
</organism>
<accession>Q3J055</accession>
<feature type="chain" id="PRO_0000257114" description="Probable transcriptional regulatory protein RHOS4_22610">
    <location>
        <begin position="1"/>
        <end position="248"/>
    </location>
</feature>
<feature type="region of interest" description="Disordered" evidence="2">
    <location>
        <begin position="1"/>
        <end position="21"/>
    </location>
</feature>